<keyword id="KW-1185">Reference proteome</keyword>
<keyword id="KW-0687">Ribonucleoprotein</keyword>
<keyword id="KW-0689">Ribosomal protein</keyword>
<keyword id="KW-0694">RNA-binding</keyword>
<keyword id="KW-0699">rRNA-binding</keyword>
<dbReference type="EMBL" id="AF115283">
    <property type="protein sequence ID" value="AAD40609.1"/>
    <property type="molecule type" value="Genomic_DNA"/>
</dbReference>
<dbReference type="EMBL" id="AE010300">
    <property type="protein sequence ID" value="AAN47963.1"/>
    <property type="molecule type" value="Genomic_DNA"/>
</dbReference>
<dbReference type="RefSeq" id="NP_710945.1">
    <property type="nucleotide sequence ID" value="NC_004342.2"/>
</dbReference>
<dbReference type="RefSeq" id="WP_000135260.1">
    <property type="nucleotide sequence ID" value="NC_004342.2"/>
</dbReference>
<dbReference type="SMR" id="Q9XD10"/>
<dbReference type="FunCoup" id="Q9XD10">
    <property type="interactions" value="582"/>
</dbReference>
<dbReference type="STRING" id="189518.LA_0764"/>
<dbReference type="PaxDb" id="189518-LA_0764"/>
<dbReference type="EnsemblBacteria" id="AAN47963">
    <property type="protein sequence ID" value="AAN47963"/>
    <property type="gene ID" value="LA_0764"/>
</dbReference>
<dbReference type="GeneID" id="61142721"/>
<dbReference type="KEGG" id="lil:LA_0764"/>
<dbReference type="PATRIC" id="fig|189518.3.peg.771"/>
<dbReference type="HOGENOM" id="CLU_092403_0_2_12"/>
<dbReference type="InParanoid" id="Q9XD10"/>
<dbReference type="OrthoDB" id="9803672at2"/>
<dbReference type="Proteomes" id="UP000001408">
    <property type="component" value="Chromosome I"/>
</dbReference>
<dbReference type="GO" id="GO:0015935">
    <property type="term" value="C:small ribosomal subunit"/>
    <property type="evidence" value="ECO:0000318"/>
    <property type="project" value="GO_Central"/>
</dbReference>
<dbReference type="GO" id="GO:0019843">
    <property type="term" value="F:rRNA binding"/>
    <property type="evidence" value="ECO:0000318"/>
    <property type="project" value="GO_Central"/>
</dbReference>
<dbReference type="GO" id="GO:0003735">
    <property type="term" value="F:structural constituent of ribosome"/>
    <property type="evidence" value="ECO:0000318"/>
    <property type="project" value="GO_Central"/>
</dbReference>
<dbReference type="GO" id="GO:0042274">
    <property type="term" value="P:ribosomal small subunit biogenesis"/>
    <property type="evidence" value="ECO:0000318"/>
    <property type="project" value="GO_Central"/>
</dbReference>
<dbReference type="GO" id="GO:0006412">
    <property type="term" value="P:translation"/>
    <property type="evidence" value="ECO:0007669"/>
    <property type="project" value="UniProtKB-UniRule"/>
</dbReference>
<dbReference type="CDD" id="cd00165">
    <property type="entry name" value="S4"/>
    <property type="match status" value="1"/>
</dbReference>
<dbReference type="FunFam" id="3.10.290.10:FF:000001">
    <property type="entry name" value="30S ribosomal protein S4"/>
    <property type="match status" value="1"/>
</dbReference>
<dbReference type="Gene3D" id="1.10.1050.10">
    <property type="entry name" value="Ribosomal Protein S4 Delta 41, Chain A, domain 1"/>
    <property type="match status" value="1"/>
</dbReference>
<dbReference type="Gene3D" id="3.10.290.10">
    <property type="entry name" value="RNA-binding S4 domain"/>
    <property type="match status" value="1"/>
</dbReference>
<dbReference type="HAMAP" id="MF_01306_B">
    <property type="entry name" value="Ribosomal_uS4_B"/>
    <property type="match status" value="1"/>
</dbReference>
<dbReference type="InterPro" id="IPR022801">
    <property type="entry name" value="Ribosomal_uS4"/>
</dbReference>
<dbReference type="InterPro" id="IPR005709">
    <property type="entry name" value="Ribosomal_uS4_bac-type"/>
</dbReference>
<dbReference type="InterPro" id="IPR018079">
    <property type="entry name" value="Ribosomal_uS4_CS"/>
</dbReference>
<dbReference type="InterPro" id="IPR001912">
    <property type="entry name" value="Ribosomal_uS4_N"/>
</dbReference>
<dbReference type="InterPro" id="IPR002942">
    <property type="entry name" value="S4_RNA-bd"/>
</dbReference>
<dbReference type="InterPro" id="IPR036986">
    <property type="entry name" value="S4_RNA-bd_sf"/>
</dbReference>
<dbReference type="NCBIfam" id="NF003717">
    <property type="entry name" value="PRK05327.1"/>
    <property type="match status" value="1"/>
</dbReference>
<dbReference type="NCBIfam" id="TIGR01017">
    <property type="entry name" value="rpsD_bact"/>
    <property type="match status" value="1"/>
</dbReference>
<dbReference type="PANTHER" id="PTHR11831">
    <property type="entry name" value="30S 40S RIBOSOMAL PROTEIN"/>
    <property type="match status" value="1"/>
</dbReference>
<dbReference type="PANTHER" id="PTHR11831:SF4">
    <property type="entry name" value="SMALL RIBOSOMAL SUBUNIT PROTEIN US4M"/>
    <property type="match status" value="1"/>
</dbReference>
<dbReference type="Pfam" id="PF00163">
    <property type="entry name" value="Ribosomal_S4"/>
    <property type="match status" value="1"/>
</dbReference>
<dbReference type="Pfam" id="PF01479">
    <property type="entry name" value="S4"/>
    <property type="match status" value="1"/>
</dbReference>
<dbReference type="SMART" id="SM01390">
    <property type="entry name" value="Ribosomal_S4"/>
    <property type="match status" value="1"/>
</dbReference>
<dbReference type="SMART" id="SM00363">
    <property type="entry name" value="S4"/>
    <property type="match status" value="1"/>
</dbReference>
<dbReference type="SUPFAM" id="SSF55174">
    <property type="entry name" value="Alpha-L RNA-binding motif"/>
    <property type="match status" value="1"/>
</dbReference>
<dbReference type="PROSITE" id="PS00632">
    <property type="entry name" value="RIBOSOMAL_S4"/>
    <property type="match status" value="1"/>
</dbReference>
<dbReference type="PROSITE" id="PS50889">
    <property type="entry name" value="S4"/>
    <property type="match status" value="1"/>
</dbReference>
<feature type="chain" id="PRO_0000132404" description="Small ribosomal subunit protein uS4">
    <location>
        <begin position="1"/>
        <end position="207"/>
    </location>
</feature>
<feature type="domain" description="S4 RNA-binding" evidence="1">
    <location>
        <begin position="96"/>
        <end position="156"/>
    </location>
</feature>
<feature type="sequence conflict" description="In Ref. 1; AAD40609." evidence="2" ref="1">
    <original>K</original>
    <variation>E</variation>
    <location>
        <position position="58"/>
    </location>
</feature>
<protein>
    <recommendedName>
        <fullName evidence="1">Small ribosomal subunit protein uS4</fullName>
    </recommendedName>
    <alternativeName>
        <fullName evidence="2">30S ribosomal protein S4</fullName>
    </alternativeName>
</protein>
<proteinExistence type="inferred from homology"/>
<comment type="function">
    <text evidence="1">One of the primary rRNA binding proteins, it binds directly to 16S rRNA where it nucleates assembly of the body of the 30S subunit.</text>
</comment>
<comment type="function">
    <text evidence="1">With S5 and S12 plays an important role in translational accuracy.</text>
</comment>
<comment type="subunit">
    <text evidence="1">Part of the 30S ribosomal subunit. Contacts protein S5. The interaction surface between S4 and S5 is involved in control of translational fidelity.</text>
</comment>
<comment type="similarity">
    <text evidence="1">Belongs to the universal ribosomal protein uS4 family.</text>
</comment>
<evidence type="ECO:0000255" key="1">
    <source>
        <dbReference type="HAMAP-Rule" id="MF_01306"/>
    </source>
</evidence>
<evidence type="ECO:0000305" key="2"/>
<sequence length="207" mass="24044">MARYRGPVVKIMRREGVDLFLKSSYTFNKDKFHRKGPPGMPTKRKGKVSEYGAQLREKQKLKRAYGLLEKQFRRYYEEASHAHGVTGEILLQLLERRLDNVVYRLGFAITRRQARNFIAHRHILVNGERVDIPSYRLNVGDKVEIREKFKTSSFIADNIKLSQSLQGIPSWLSADYTNFGGDVTALPERHHIDLPVKEQVIVELYSK</sequence>
<organism>
    <name type="scientific">Leptospira interrogans serogroup Icterohaemorrhagiae serovar Lai (strain 56601)</name>
    <dbReference type="NCBI Taxonomy" id="189518"/>
    <lineage>
        <taxon>Bacteria</taxon>
        <taxon>Pseudomonadati</taxon>
        <taxon>Spirochaetota</taxon>
        <taxon>Spirochaetia</taxon>
        <taxon>Leptospirales</taxon>
        <taxon>Leptospiraceae</taxon>
        <taxon>Leptospira</taxon>
    </lineage>
</organism>
<accession>Q9XD10</accession>
<reference key="1">
    <citation type="journal article" date="2000" name="FEMS Microbiol. Lett.">
        <title>Characterization of the Leptospira interrogans S10-spc-alpha operon.</title>
        <authorList>
            <person name="Zuerner R.L."/>
            <person name="Hartskeerl R.A."/>
            <person name="van de Kemp H."/>
            <person name="Bal A.E."/>
        </authorList>
    </citation>
    <scope>NUCLEOTIDE SEQUENCE [GENOMIC DNA]</scope>
    <source>
        <strain>Lai / Serogroup Icterohaemorrhagiae / Serovar lai</strain>
    </source>
</reference>
<reference key="2">
    <citation type="journal article" date="2003" name="Nature">
        <title>Unique physiological and pathogenic features of Leptospira interrogans revealed by whole-genome sequencing.</title>
        <authorList>
            <person name="Ren S.-X."/>
            <person name="Fu G."/>
            <person name="Jiang X.-G."/>
            <person name="Zeng R."/>
            <person name="Miao Y.-G."/>
            <person name="Xu H."/>
            <person name="Zhang Y.-X."/>
            <person name="Xiong H."/>
            <person name="Lu G."/>
            <person name="Lu L.-F."/>
            <person name="Jiang H.-Q."/>
            <person name="Jia J."/>
            <person name="Tu Y.-F."/>
            <person name="Jiang J.-X."/>
            <person name="Gu W.-Y."/>
            <person name="Zhang Y.-Q."/>
            <person name="Cai Z."/>
            <person name="Sheng H.-H."/>
            <person name="Yin H.-F."/>
            <person name="Zhang Y."/>
            <person name="Zhu G.-F."/>
            <person name="Wan M."/>
            <person name="Huang H.-L."/>
            <person name="Qian Z."/>
            <person name="Wang S.-Y."/>
            <person name="Ma W."/>
            <person name="Yao Z.-J."/>
            <person name="Shen Y."/>
            <person name="Qiang B.-Q."/>
            <person name="Xia Q.-C."/>
            <person name="Guo X.-K."/>
            <person name="Danchin A."/>
            <person name="Saint Girons I."/>
            <person name="Somerville R.L."/>
            <person name="Wen Y.-M."/>
            <person name="Shi M.-H."/>
            <person name="Chen Z."/>
            <person name="Xu J.-G."/>
            <person name="Zhao G.-P."/>
        </authorList>
    </citation>
    <scope>NUCLEOTIDE SEQUENCE [LARGE SCALE GENOMIC DNA]</scope>
    <source>
        <strain>56601</strain>
    </source>
</reference>
<gene>
    <name evidence="1" type="primary">rpsD</name>
    <name type="ordered locus">LA_0764</name>
</gene>
<name>RS4_LEPIN</name>